<sequence>MTSFTESKKLDEIESPVPEIIVPSTTNGNGTIESYKEKSVGTSFLDFFRSYKLRPDNEFAEVHNSEDFLKPRHLQMIAIGSCIGTGLFVSTGKSLKNAGPGSLMINFIILSAMILALILSLGEMCCFLPNQSSITMYTGRLLNNNIGFAQSWLYFWIWLTVLPSEISAACEVVDFWTTQHLNPAIWVTIFLAYVVLVNAFGARSYGECEFVSSFLKVVIVIIFFFVAIIINCGAAPKGGYIGAHYWHHPGSFRNGFKGFCSVFISSAYSLSGTENIGTAAGNTSNPQRAIPSAVKKVFYRMGFFYIITIFLITLVVPYDNPDLGNVSPFIIAIKNGGIHVLPHITNAVILVSVLSVGNAAVFAASRNAMALVKQGWAPRFLGRVDQKGRPVISYLCSLAMACIAYVNAAPDGSVVFDWLMSVSGGGAFVIWGLSFIDHIRLRYAMKAQKIPDTVLPYKFPGSVYLSYYGVLINFLALCALVYISIFPVTHEKPSAYGFFVSFLGPSVFIAYLLISPIFVKPTFQSLKDVDLTTGRYDLVNSQMYVAESSTSELSEKDLTKPNLQSNDNKNSEDLESNTPPQKKSALQKVADFLC</sequence>
<organism>
    <name type="scientific">Schizosaccharomyces pombe (strain 972 / ATCC 24843)</name>
    <name type="common">Fission yeast</name>
    <dbReference type="NCBI Taxonomy" id="284812"/>
    <lineage>
        <taxon>Eukaryota</taxon>
        <taxon>Fungi</taxon>
        <taxon>Dikarya</taxon>
        <taxon>Ascomycota</taxon>
        <taxon>Taphrinomycotina</taxon>
        <taxon>Schizosaccharomycetes</taxon>
        <taxon>Schizosaccharomycetales</taxon>
        <taxon>Schizosaccharomycetaceae</taxon>
        <taxon>Schizosaccharomyces</taxon>
    </lineage>
</organism>
<keyword id="KW-0029">Amino-acid transport</keyword>
<keyword id="KW-0472">Membrane</keyword>
<keyword id="KW-1185">Reference proteome</keyword>
<keyword id="KW-0812">Transmembrane</keyword>
<keyword id="KW-1133">Transmembrane helix</keyword>
<keyword id="KW-0813">Transport</keyword>
<evidence type="ECO:0000255" key="1"/>
<evidence type="ECO:0000256" key="2">
    <source>
        <dbReference type="SAM" id="MobiDB-lite"/>
    </source>
</evidence>
<evidence type="ECO:0000305" key="3"/>
<comment type="subcellular location">
    <subcellularLocation>
        <location evidence="3">Membrane</location>
        <topology evidence="3">Multi-pass membrane protein</topology>
    </subcellularLocation>
</comment>
<comment type="similarity">
    <text evidence="3">Belongs to the amino acid-polyamine-organocation (APC) superfamily.</text>
</comment>
<proteinExistence type="inferred from homology"/>
<dbReference type="EMBL" id="D87954">
    <property type="protein sequence ID" value="BAA13506.1"/>
    <property type="molecule type" value="Genomic_DNA"/>
</dbReference>
<dbReference type="EMBL" id="CU329671">
    <property type="protein sequence ID" value="CAB86887.2"/>
    <property type="molecule type" value="Genomic_DNA"/>
</dbReference>
<dbReference type="EMBL" id="AB028013">
    <property type="protein sequence ID" value="BAA87317.1"/>
    <property type="molecule type" value="Genomic_DNA"/>
</dbReference>
<dbReference type="PIR" id="T43246">
    <property type="entry name" value="T43246"/>
</dbReference>
<dbReference type="RefSeq" id="NP_596769.2">
    <property type="nucleotide sequence ID" value="NM_001023790.3"/>
</dbReference>
<dbReference type="SMR" id="Q92367"/>
<dbReference type="BioGRID" id="276698">
    <property type="interactions" value="1"/>
</dbReference>
<dbReference type="FunCoup" id="Q92367">
    <property type="interactions" value="93"/>
</dbReference>
<dbReference type="STRING" id="284812.Q92367"/>
<dbReference type="iPTMnet" id="Q92367"/>
<dbReference type="PaxDb" id="4896-SPBC1652.02.1"/>
<dbReference type="EnsemblFungi" id="SPBC1652.02.1">
    <property type="protein sequence ID" value="SPBC1652.02.1:pep"/>
    <property type="gene ID" value="SPBC1652.02"/>
</dbReference>
<dbReference type="KEGG" id="spo:2540163"/>
<dbReference type="PomBase" id="SPBC1652.02"/>
<dbReference type="VEuPathDB" id="FungiDB:SPBC1652.02"/>
<dbReference type="eggNOG" id="KOG1286">
    <property type="taxonomic scope" value="Eukaryota"/>
</dbReference>
<dbReference type="HOGENOM" id="CLU_007946_12_0_1"/>
<dbReference type="InParanoid" id="Q92367"/>
<dbReference type="OMA" id="QGWAPRF"/>
<dbReference type="PhylomeDB" id="Q92367"/>
<dbReference type="PRO" id="PR:Q92367"/>
<dbReference type="Proteomes" id="UP000002485">
    <property type="component" value="Chromosome II"/>
</dbReference>
<dbReference type="GO" id="GO:0000324">
    <property type="term" value="C:fungal-type vacuole"/>
    <property type="evidence" value="ECO:0000314"/>
    <property type="project" value="PomBase"/>
</dbReference>
<dbReference type="GO" id="GO:0016020">
    <property type="term" value="C:membrane"/>
    <property type="evidence" value="ECO:0000318"/>
    <property type="project" value="GO_Central"/>
</dbReference>
<dbReference type="GO" id="GO:0005886">
    <property type="term" value="C:plasma membrane"/>
    <property type="evidence" value="ECO:0000269"/>
    <property type="project" value="PomBase"/>
</dbReference>
<dbReference type="GO" id="GO:0015171">
    <property type="term" value="F:amino acid transmembrane transporter activity"/>
    <property type="evidence" value="ECO:0000318"/>
    <property type="project" value="GO_Central"/>
</dbReference>
<dbReference type="GO" id="GO:0140135">
    <property type="term" value="F:mechanosensitive monoatomic cation channel activity"/>
    <property type="evidence" value="ECO:0000269"/>
    <property type="project" value="PomBase"/>
</dbReference>
<dbReference type="GO" id="GO:0003333">
    <property type="term" value="P:amino acid transmembrane transport"/>
    <property type="evidence" value="ECO:0000318"/>
    <property type="project" value="GO_Central"/>
</dbReference>
<dbReference type="FunFam" id="1.20.1740.10:FF:000001">
    <property type="entry name" value="Amino acid permease"/>
    <property type="match status" value="1"/>
</dbReference>
<dbReference type="Gene3D" id="1.20.1740.10">
    <property type="entry name" value="Amino acid/polyamine transporter I"/>
    <property type="match status" value="1"/>
</dbReference>
<dbReference type="InterPro" id="IPR004841">
    <property type="entry name" value="AA-permease/SLC12A_dom"/>
</dbReference>
<dbReference type="InterPro" id="IPR004840">
    <property type="entry name" value="Amino_acid_permease_CS"/>
</dbReference>
<dbReference type="InterPro" id="IPR050524">
    <property type="entry name" value="APC_YAT"/>
</dbReference>
<dbReference type="PANTHER" id="PTHR43341">
    <property type="entry name" value="AMINO ACID PERMEASE"/>
    <property type="match status" value="1"/>
</dbReference>
<dbReference type="PANTHER" id="PTHR43341:SF43">
    <property type="entry name" value="AMINO-ACID PERMEASE 1"/>
    <property type="match status" value="1"/>
</dbReference>
<dbReference type="Pfam" id="PF00324">
    <property type="entry name" value="AA_permease"/>
    <property type="match status" value="1"/>
</dbReference>
<dbReference type="PROSITE" id="PS00218">
    <property type="entry name" value="AMINO_ACID_PERMEASE_1"/>
    <property type="match status" value="1"/>
</dbReference>
<accession>Q92367</accession>
<accession>Q9P7A9</accession>
<accession>Q9UTT7</accession>
<feature type="chain" id="PRO_0000054166" description="Amino-acid permease 1">
    <location>
        <begin position="1"/>
        <end position="594"/>
    </location>
</feature>
<feature type="transmembrane region" description="Helical" evidence="1">
    <location>
        <begin position="75"/>
        <end position="95"/>
    </location>
</feature>
<feature type="transmembrane region" description="Helical" evidence="1">
    <location>
        <begin position="101"/>
        <end position="121"/>
    </location>
</feature>
<feature type="transmembrane region" description="Helical" evidence="1">
    <location>
        <begin position="146"/>
        <end position="166"/>
    </location>
</feature>
<feature type="transmembrane region" description="Helical" evidence="1">
    <location>
        <begin position="181"/>
        <end position="201"/>
    </location>
</feature>
<feature type="transmembrane region" description="Helical" evidence="1">
    <location>
        <begin position="210"/>
        <end position="230"/>
    </location>
</feature>
<feature type="transmembrane region" description="Helical" evidence="1">
    <location>
        <begin position="297"/>
        <end position="317"/>
    </location>
</feature>
<feature type="transmembrane region" description="Helical" evidence="1">
    <location>
        <begin position="323"/>
        <end position="343"/>
    </location>
</feature>
<feature type="transmembrane region" description="Helical" evidence="1">
    <location>
        <begin position="344"/>
        <end position="364"/>
    </location>
</feature>
<feature type="transmembrane region" description="Helical" evidence="1">
    <location>
        <begin position="390"/>
        <end position="410"/>
    </location>
</feature>
<feature type="transmembrane region" description="Helical" evidence="1">
    <location>
        <begin position="416"/>
        <end position="436"/>
    </location>
</feature>
<feature type="transmembrane region" description="Helical" evidence="1">
    <location>
        <begin position="468"/>
        <end position="488"/>
    </location>
</feature>
<feature type="transmembrane region" description="Helical" evidence="1">
    <location>
        <begin position="498"/>
        <end position="518"/>
    </location>
</feature>
<feature type="region of interest" description="Disordered" evidence="2">
    <location>
        <begin position="550"/>
        <end position="587"/>
    </location>
</feature>
<name>AAP1_SCHPO</name>
<protein>
    <recommendedName>
        <fullName>Amino-acid permease 1</fullName>
    </recommendedName>
</protein>
<gene>
    <name type="primary">aap1</name>
    <name type="ORF">SPBC1652.02</name>
    <name type="ORF">SPBC16A3.20c</name>
</gene>
<reference key="1">
    <citation type="submission" date="1996-09" db="EMBL/GenBank/DDBJ databases">
        <authorList>
            <person name="Okazaki K."/>
            <person name="Okayama H."/>
        </authorList>
    </citation>
    <scope>NUCLEOTIDE SEQUENCE [GENOMIC DNA]</scope>
</reference>
<reference key="2">
    <citation type="journal article" date="2002" name="Nature">
        <title>The genome sequence of Schizosaccharomyces pombe.</title>
        <authorList>
            <person name="Wood V."/>
            <person name="Gwilliam R."/>
            <person name="Rajandream M.A."/>
            <person name="Lyne M.H."/>
            <person name="Lyne R."/>
            <person name="Stewart A."/>
            <person name="Sgouros J.G."/>
            <person name="Peat N."/>
            <person name="Hayles J."/>
            <person name="Baker S.G."/>
            <person name="Basham D."/>
            <person name="Bowman S."/>
            <person name="Brooks K."/>
            <person name="Brown D."/>
            <person name="Brown S."/>
            <person name="Chillingworth T."/>
            <person name="Churcher C.M."/>
            <person name="Collins M."/>
            <person name="Connor R."/>
            <person name="Cronin A."/>
            <person name="Davis P."/>
            <person name="Feltwell T."/>
            <person name="Fraser A."/>
            <person name="Gentles S."/>
            <person name="Goble A."/>
            <person name="Hamlin N."/>
            <person name="Harris D.E."/>
            <person name="Hidalgo J."/>
            <person name="Hodgson G."/>
            <person name="Holroyd S."/>
            <person name="Hornsby T."/>
            <person name="Howarth S."/>
            <person name="Huckle E.J."/>
            <person name="Hunt S."/>
            <person name="Jagels K."/>
            <person name="James K.D."/>
            <person name="Jones L."/>
            <person name="Jones M."/>
            <person name="Leather S."/>
            <person name="McDonald S."/>
            <person name="McLean J."/>
            <person name="Mooney P."/>
            <person name="Moule S."/>
            <person name="Mungall K.L."/>
            <person name="Murphy L.D."/>
            <person name="Niblett D."/>
            <person name="Odell C."/>
            <person name="Oliver K."/>
            <person name="O'Neil S."/>
            <person name="Pearson D."/>
            <person name="Quail M.A."/>
            <person name="Rabbinowitsch E."/>
            <person name="Rutherford K.M."/>
            <person name="Rutter S."/>
            <person name="Saunders D."/>
            <person name="Seeger K."/>
            <person name="Sharp S."/>
            <person name="Skelton J."/>
            <person name="Simmonds M.N."/>
            <person name="Squares R."/>
            <person name="Squares S."/>
            <person name="Stevens K."/>
            <person name="Taylor K."/>
            <person name="Taylor R.G."/>
            <person name="Tivey A."/>
            <person name="Walsh S.V."/>
            <person name="Warren T."/>
            <person name="Whitehead S."/>
            <person name="Woodward J.R."/>
            <person name="Volckaert G."/>
            <person name="Aert R."/>
            <person name="Robben J."/>
            <person name="Grymonprez B."/>
            <person name="Weltjens I."/>
            <person name="Vanstreels E."/>
            <person name="Rieger M."/>
            <person name="Schaefer M."/>
            <person name="Mueller-Auer S."/>
            <person name="Gabel C."/>
            <person name="Fuchs M."/>
            <person name="Duesterhoeft A."/>
            <person name="Fritzc C."/>
            <person name="Holzer E."/>
            <person name="Moestl D."/>
            <person name="Hilbert H."/>
            <person name="Borzym K."/>
            <person name="Langer I."/>
            <person name="Beck A."/>
            <person name="Lehrach H."/>
            <person name="Reinhardt R."/>
            <person name="Pohl T.M."/>
            <person name="Eger P."/>
            <person name="Zimmermann W."/>
            <person name="Wedler H."/>
            <person name="Wambutt R."/>
            <person name="Purnelle B."/>
            <person name="Goffeau A."/>
            <person name="Cadieu E."/>
            <person name="Dreano S."/>
            <person name="Gloux S."/>
            <person name="Lelaure V."/>
            <person name="Mottier S."/>
            <person name="Galibert F."/>
            <person name="Aves S.J."/>
            <person name="Xiang Z."/>
            <person name="Hunt C."/>
            <person name="Moore K."/>
            <person name="Hurst S.M."/>
            <person name="Lucas M."/>
            <person name="Rochet M."/>
            <person name="Gaillardin C."/>
            <person name="Tallada V.A."/>
            <person name="Garzon A."/>
            <person name="Thode G."/>
            <person name="Daga R.R."/>
            <person name="Cruzado L."/>
            <person name="Jimenez J."/>
            <person name="Sanchez M."/>
            <person name="del Rey F."/>
            <person name="Benito J."/>
            <person name="Dominguez A."/>
            <person name="Revuelta J.L."/>
            <person name="Moreno S."/>
            <person name="Armstrong J."/>
            <person name="Forsburg S.L."/>
            <person name="Cerutti L."/>
            <person name="Lowe T."/>
            <person name="McCombie W.R."/>
            <person name="Paulsen I."/>
            <person name="Potashkin J."/>
            <person name="Shpakovski G.V."/>
            <person name="Ussery D."/>
            <person name="Barrell B.G."/>
            <person name="Nurse P."/>
        </authorList>
    </citation>
    <scope>NUCLEOTIDE SEQUENCE [LARGE SCALE GENOMIC DNA]</scope>
    <source>
        <strain>972 / ATCC 24843</strain>
    </source>
</reference>
<reference key="3">
    <citation type="journal article" date="2000" name="Genes Cells">
        <title>Large-scale screening of intracellular protein localization in living fission yeast cells by the use of a GFP-fusion genomic DNA library.</title>
        <authorList>
            <person name="Ding D.-Q."/>
            <person name="Tomita Y."/>
            <person name="Yamamoto A."/>
            <person name="Chikashige Y."/>
            <person name="Haraguchi T."/>
            <person name="Hiraoka Y."/>
        </authorList>
    </citation>
    <scope>NUCLEOTIDE SEQUENCE [LARGE SCALE GENOMIC DNA] OF 473-557</scope>
    <source>
        <strain>ATCC 38364 / 968</strain>
    </source>
</reference>